<evidence type="ECO:0000255" key="1"/>
<evidence type="ECO:0000255" key="2">
    <source>
        <dbReference type="PROSITE-ProRule" id="PRU00279"/>
    </source>
</evidence>
<evidence type="ECO:0000269" key="3">
    <source>
    </source>
</evidence>
<evidence type="ECO:0000303" key="4">
    <source>
    </source>
</evidence>
<evidence type="ECO:0000305" key="5"/>
<evidence type="ECO:0000305" key="6">
    <source>
    </source>
</evidence>
<name>SLD1_KOMPG</name>
<keyword id="KW-0249">Electron transport</keyword>
<keyword id="KW-0349">Heme</keyword>
<keyword id="KW-0408">Iron</keyword>
<keyword id="KW-0443">Lipid metabolism</keyword>
<keyword id="KW-0472">Membrane</keyword>
<keyword id="KW-0479">Metal-binding</keyword>
<keyword id="KW-0560">Oxidoreductase</keyword>
<keyword id="KW-1185">Reference proteome</keyword>
<keyword id="KW-0746">Sphingolipid metabolism</keyword>
<keyword id="KW-0812">Transmembrane</keyword>
<keyword id="KW-1133">Transmembrane helix</keyword>
<keyword id="KW-0813">Transport</keyword>
<protein>
    <recommendedName>
        <fullName evidence="4">Delta 8-(E)-sphingolipid desaturase</fullName>
        <ecNumber evidence="6">1.14.19.18</ecNumber>
    </recommendedName>
</protein>
<dbReference type="EC" id="1.14.19.18" evidence="6"/>
<dbReference type="EMBL" id="AY700777">
    <property type="protein sequence ID" value="AAU10084.1"/>
    <property type="molecule type" value="Genomic_DNA"/>
</dbReference>
<dbReference type="EMBL" id="FN392319">
    <property type="protein sequence ID" value="CAY67366.1"/>
    <property type="molecule type" value="Genomic_DNA"/>
</dbReference>
<dbReference type="RefSeq" id="XP_002489647.1">
    <property type="nucleotide sequence ID" value="XM_002489602.1"/>
</dbReference>
<dbReference type="SMR" id="C4QVU3"/>
<dbReference type="STRING" id="644223.C4QVU3"/>
<dbReference type="EnsemblFungi" id="CAY67366">
    <property type="protein sequence ID" value="CAY67366"/>
    <property type="gene ID" value="PAS_chr1-1_0013"/>
</dbReference>
<dbReference type="GeneID" id="8197530"/>
<dbReference type="KEGG" id="ppa:PAS_chr1-1_0013"/>
<dbReference type="eggNOG" id="KOG4232">
    <property type="taxonomic scope" value="Eukaryota"/>
</dbReference>
<dbReference type="HOGENOM" id="CLU_016265_3_1_1"/>
<dbReference type="InParanoid" id="C4QVU3"/>
<dbReference type="OMA" id="EFCRISS"/>
<dbReference type="OrthoDB" id="260091at2759"/>
<dbReference type="UniPathway" id="UPA00222"/>
<dbReference type="Proteomes" id="UP000000314">
    <property type="component" value="Chromosome 1"/>
</dbReference>
<dbReference type="GO" id="GO:0016020">
    <property type="term" value="C:membrane"/>
    <property type="evidence" value="ECO:0007669"/>
    <property type="project" value="UniProtKB-SubCell"/>
</dbReference>
<dbReference type="GO" id="GO:0046872">
    <property type="term" value="F:metal ion binding"/>
    <property type="evidence" value="ECO:0007669"/>
    <property type="project" value="UniProtKB-KW"/>
</dbReference>
<dbReference type="GO" id="GO:0016717">
    <property type="term" value="F:oxidoreductase activity, acting on paired donors, with oxidation of a pair of donors resulting in the reduction of molecular oxygen to two molecules of water"/>
    <property type="evidence" value="ECO:0007669"/>
    <property type="project" value="TreeGrafter"/>
</dbReference>
<dbReference type="GO" id="GO:0006665">
    <property type="term" value="P:sphingolipid metabolic process"/>
    <property type="evidence" value="ECO:0007669"/>
    <property type="project" value="UniProtKB-UniPathway"/>
</dbReference>
<dbReference type="CDD" id="cd03506">
    <property type="entry name" value="Delta6-FADS-like"/>
    <property type="match status" value="1"/>
</dbReference>
<dbReference type="Gene3D" id="3.10.120.10">
    <property type="entry name" value="Cytochrome b5-like heme/steroid binding domain"/>
    <property type="match status" value="1"/>
</dbReference>
<dbReference type="InterPro" id="IPR001199">
    <property type="entry name" value="Cyt_B5-like_heme/steroid-bd"/>
</dbReference>
<dbReference type="InterPro" id="IPR036400">
    <property type="entry name" value="Cyt_B5-like_heme/steroid_sf"/>
</dbReference>
<dbReference type="InterPro" id="IPR005804">
    <property type="entry name" value="FA_desaturase_dom"/>
</dbReference>
<dbReference type="InterPro" id="IPR012171">
    <property type="entry name" value="Fatty_acid_desaturase"/>
</dbReference>
<dbReference type="PANTHER" id="PTHR19353:SF30">
    <property type="entry name" value="DELTA 8-(E)-SPHINGOLIPID DESATURASE"/>
    <property type="match status" value="1"/>
</dbReference>
<dbReference type="PANTHER" id="PTHR19353">
    <property type="entry name" value="FATTY ACID DESATURASE 2"/>
    <property type="match status" value="1"/>
</dbReference>
<dbReference type="Pfam" id="PF00173">
    <property type="entry name" value="Cyt-b5"/>
    <property type="match status" value="1"/>
</dbReference>
<dbReference type="Pfam" id="PF00487">
    <property type="entry name" value="FA_desaturase"/>
    <property type="match status" value="1"/>
</dbReference>
<dbReference type="PIRSF" id="PIRSF015921">
    <property type="entry name" value="FA_sphinglp_des"/>
    <property type="match status" value="1"/>
</dbReference>
<dbReference type="SMART" id="SM01117">
    <property type="entry name" value="Cyt-b5"/>
    <property type="match status" value="1"/>
</dbReference>
<dbReference type="SUPFAM" id="SSF55856">
    <property type="entry name" value="Cytochrome b5-like heme/steroid binding domain"/>
    <property type="match status" value="1"/>
</dbReference>
<dbReference type="PROSITE" id="PS50255">
    <property type="entry name" value="CYTOCHROME_B5_2"/>
    <property type="match status" value="1"/>
</dbReference>
<feature type="chain" id="PRO_0000434804" description="Delta 8-(E)-sphingolipid desaturase">
    <location>
        <begin position="1"/>
        <end position="542"/>
    </location>
</feature>
<feature type="transmembrane region" description="Helical" evidence="1">
    <location>
        <begin position="215"/>
        <end position="235"/>
    </location>
</feature>
<feature type="transmembrane region" description="Helical" evidence="1">
    <location>
        <begin position="248"/>
        <end position="268"/>
    </location>
</feature>
<feature type="transmembrane region" description="Helical" evidence="1">
    <location>
        <begin position="329"/>
        <end position="346"/>
    </location>
</feature>
<feature type="transmembrane region" description="Helical" evidence="1">
    <location>
        <begin position="360"/>
        <end position="380"/>
    </location>
</feature>
<feature type="transmembrane region" description="Helical" evidence="1">
    <location>
        <begin position="393"/>
        <end position="413"/>
    </location>
</feature>
<feature type="domain" description="Cytochrome b5 heme-binding" evidence="2">
    <location>
        <begin position="1"/>
        <end position="75"/>
    </location>
</feature>
<feature type="short sequence motif" description="Histidine box-1" evidence="5">
    <location>
        <begin position="235"/>
        <end position="239"/>
    </location>
</feature>
<feature type="short sequence motif" description="Histidine box-2" evidence="5">
    <location>
        <begin position="272"/>
        <end position="276"/>
    </location>
</feature>
<feature type="short sequence motif" description="Histidine box-3" evidence="5">
    <location>
        <begin position="455"/>
        <end position="459"/>
    </location>
</feature>
<feature type="binding site" description="axial binding residue" evidence="2">
    <location>
        <position position="35"/>
    </location>
    <ligand>
        <name>heme</name>
        <dbReference type="ChEBI" id="CHEBI:30413"/>
    </ligand>
    <ligandPart>
        <name>Fe</name>
        <dbReference type="ChEBI" id="CHEBI:18248"/>
    </ligandPart>
</feature>
<feature type="binding site" description="axial binding residue" evidence="2">
    <location>
        <position position="58"/>
    </location>
    <ligand>
        <name>heme</name>
        <dbReference type="ChEBI" id="CHEBI:30413"/>
    </ligand>
    <ligandPart>
        <name>Fe</name>
        <dbReference type="ChEBI" id="CHEBI:18248"/>
    </ligandPart>
</feature>
<sequence>MVVSREEVREIIGRGNAIVIYEDHLLNLNGWLERHPGGEKAIHHMIGRDASDEMNAYHDPETVKTFKRWSIGRVKLPWDNLVPPIQGGNYSFDKVDQRVIYKKLGIFPGVKIEPKVQENIVLTEKSASKLLPVGGVRDPKTIIEDFDNKLVYEDIKQIPSLDHETQRNLSLQYNELHQTIINRGYYQCDYWQYFKEFCRISSLFLLFVLFLRSKWYTLSAISIGLMWQQLVFIAHDAGHISITHNYQIDNIIGIIIANFIGGLSLGWWKRNHNVHHLVTNDPVHDPDIQHLPFFAVSSRLLGNVFSTYYEKYLWFDKIAQKMLQIQHKLYYPILSFGRFNLYRLSWSHLIMGLGPRKGKAAWFRYLELIGLCFFSYWFFYKTMSYIPTKTLRFWFLLISHWTTMIVHVQIVLSHFAMSTSDLGSTESFVSRQLRTTMDVDCPEWFDFFHGGLQFQAIHHLFPRLPRHNFRKVQPLVIEFCKNTGLHYSIYGFVDGNGKVVNKMADVASQVVILNDCLHSIHLENTTGKNLYEAKVESVSIKG</sequence>
<accession>C4QVU3</accession>
<accession>Q66VZ5</accession>
<gene>
    <name type="ordered locus">PAS_chr1-1_0013</name>
</gene>
<organism>
    <name type="scientific">Komagataella phaffii (strain GS115 / ATCC 20864)</name>
    <name type="common">Yeast</name>
    <name type="synonym">Pichia pastoris</name>
    <dbReference type="NCBI Taxonomy" id="644223"/>
    <lineage>
        <taxon>Eukaryota</taxon>
        <taxon>Fungi</taxon>
        <taxon>Dikarya</taxon>
        <taxon>Ascomycota</taxon>
        <taxon>Saccharomycotina</taxon>
        <taxon>Pichiomycetes</taxon>
        <taxon>Pichiales</taxon>
        <taxon>Pichiaceae</taxon>
        <taxon>Komagataella</taxon>
    </lineage>
</organism>
<comment type="function">
    <text evidence="3">Delta(8)-fatty-acid desaturase which introduces a double bond at the 8-position in the long-chain base (LCB) of ceramides. Required for the formation of the di-unsaturated sphingoid base (E,E)-sphinga-4,8-dienine during glucosylceramide (GluCer) biosynthesis.</text>
</comment>
<comment type="catalytic activity">
    <reaction evidence="6">
        <text>an N-acylsphing-4-enine + 2 Fe(II)-[cytochrome b5] + O2 + 2 H(+) = a (4E,8E)-4-sphinga-4,8-dienine ceramide + 2 Fe(III)-[cytochrome b5] + 2 H2O</text>
        <dbReference type="Rhea" id="RHEA:46280"/>
        <dbReference type="Rhea" id="RHEA-COMP:10438"/>
        <dbReference type="Rhea" id="RHEA-COMP:10439"/>
        <dbReference type="ChEBI" id="CHEBI:15377"/>
        <dbReference type="ChEBI" id="CHEBI:15378"/>
        <dbReference type="ChEBI" id="CHEBI:15379"/>
        <dbReference type="ChEBI" id="CHEBI:29033"/>
        <dbReference type="ChEBI" id="CHEBI:29034"/>
        <dbReference type="ChEBI" id="CHEBI:52639"/>
        <dbReference type="ChEBI" id="CHEBI:85953"/>
        <dbReference type="EC" id="1.14.19.18"/>
    </reaction>
</comment>
<comment type="pathway">
    <text evidence="6">Lipid metabolism; sphingolipid metabolism.</text>
</comment>
<comment type="subcellular location">
    <subcellularLocation>
        <location evidence="1">Membrane</location>
        <topology evidence="1">Multi-pass membrane protein</topology>
    </subcellularLocation>
</comment>
<comment type="similarity">
    <text evidence="5">Belongs to the fatty acid desaturase type 1 family.</text>
</comment>
<proteinExistence type="inferred from homology"/>
<reference key="1">
    <citation type="journal article" date="2006" name="J. Biol. Chem.">
        <title>Identification of fungal sphingolipid C9-methyltransferases by phylogenetic profiling.</title>
        <authorList>
            <person name="Ternes P."/>
            <person name="Sperling P."/>
            <person name="Albrecht S."/>
            <person name="Franke S."/>
            <person name="Cregg J.M."/>
            <person name="Warnecke D."/>
            <person name="Heinz E."/>
        </authorList>
    </citation>
    <scope>NUCLEOTIDE SEQUENCE [GENOMIC DNA]</scope>
    <scope>FUNCTION</scope>
    <source>
        <strain>GS115 / ATCC 20864</strain>
    </source>
</reference>
<reference key="2">
    <citation type="journal article" date="2009" name="Nat. Biotechnol.">
        <title>Genome sequence of the recombinant protein production host Pichia pastoris.</title>
        <authorList>
            <person name="De Schutter K."/>
            <person name="Lin Y.-C."/>
            <person name="Tiels P."/>
            <person name="Van Hecke A."/>
            <person name="Glinka S."/>
            <person name="Weber-Lehmann J."/>
            <person name="Rouze P."/>
            <person name="Van de Peer Y."/>
            <person name="Callewaert N."/>
        </authorList>
    </citation>
    <scope>NUCLEOTIDE SEQUENCE [LARGE SCALE GENOMIC DNA]</scope>
    <source>
        <strain>GS115 / ATCC 20864</strain>
    </source>
</reference>